<organism>
    <name type="scientific">Lactuca sativa</name>
    <name type="common">Garden lettuce</name>
    <dbReference type="NCBI Taxonomy" id="4236"/>
    <lineage>
        <taxon>Eukaryota</taxon>
        <taxon>Viridiplantae</taxon>
        <taxon>Streptophyta</taxon>
        <taxon>Embryophyta</taxon>
        <taxon>Tracheophyta</taxon>
        <taxon>Spermatophyta</taxon>
        <taxon>Magnoliopsida</taxon>
        <taxon>eudicotyledons</taxon>
        <taxon>Gunneridae</taxon>
        <taxon>Pentapetalae</taxon>
        <taxon>asterids</taxon>
        <taxon>campanulids</taxon>
        <taxon>Asterales</taxon>
        <taxon>Asteraceae</taxon>
        <taxon>Cichorioideae</taxon>
        <taxon>Cichorieae</taxon>
        <taxon>Lactucinae</taxon>
        <taxon>Lactuca</taxon>
    </lineage>
</organism>
<sequence length="36" mass="4168">MLTLKLFVYTVVIFFVSLFIFGFLSNDPGRNPGREE</sequence>
<protein>
    <recommendedName>
        <fullName evidence="1">Photosystem II reaction center protein I</fullName>
        <shortName evidence="1">PSII-I</shortName>
    </recommendedName>
    <alternativeName>
        <fullName evidence="1">PSII 4.8 kDa protein</fullName>
    </alternativeName>
</protein>
<accession>Q56P16</accession>
<accession>Q1KXN8</accession>
<accession>Q332Z4</accession>
<gene>
    <name evidence="1" type="primary">psbI</name>
    <name type="ORF">LSC004</name>
</gene>
<geneLocation type="chloroplast"/>
<reference key="1">
    <citation type="journal article" date="2005" name="Mol. Biol. Evol.">
        <title>Two chloroplast DNA inversions originated simultaneously during the early evolution of the sunflower family (Asteraceae).</title>
        <authorList>
            <person name="Kim K.-J."/>
            <person name="Choi K.-S."/>
            <person name="Jansen R.K."/>
        </authorList>
    </citation>
    <scope>NUCLEOTIDE SEQUENCE [GENOMIC DNA]</scope>
</reference>
<reference key="2">
    <citation type="journal article" date="2006" name="Transgenic Res.">
        <title>Efficient and stable transformation of Lactuca sativa L. cv. Cisco (lettuce) plastids.</title>
        <authorList>
            <person name="Kanamoto H."/>
            <person name="Yamashita A."/>
            <person name="Asao H."/>
            <person name="Okumura S."/>
            <person name="Takase H."/>
            <person name="Hattori M."/>
            <person name="Yokota A."/>
            <person name="Tomizawa K."/>
        </authorList>
    </citation>
    <scope>NUCLEOTIDE SEQUENCE [LARGE SCALE GENOMIC DNA]</scope>
    <source>
        <strain>cv. Cisco</strain>
    </source>
</reference>
<reference key="3">
    <citation type="submission" date="2006-01" db="EMBL/GenBank/DDBJ databases">
        <title>A comparison of the first two published chloroplast genomes in Asteraceae: Lactuca and Helianthus.</title>
        <authorList>
            <person name="Timme R.E."/>
            <person name="Kuehl J.V."/>
            <person name="Boore J.L."/>
            <person name="Jansen R.K."/>
        </authorList>
    </citation>
    <scope>NUCLEOTIDE SEQUENCE [LARGE SCALE GENOMIC DNA]</scope>
    <source>
        <strain>cv. Salinas</strain>
    </source>
</reference>
<dbReference type="EMBL" id="AY865171">
    <property type="protein sequence ID" value="AAX58139.1"/>
    <property type="molecule type" value="Genomic_DNA"/>
</dbReference>
<dbReference type="EMBL" id="AP007232">
    <property type="protein sequence ID" value="BAE47578.1"/>
    <property type="molecule type" value="Genomic_DNA"/>
</dbReference>
<dbReference type="EMBL" id="DQ383816">
    <property type="protein sequence ID" value="ABD47217.1"/>
    <property type="molecule type" value="Genomic_DNA"/>
</dbReference>
<dbReference type="RefSeq" id="YP_398313.1">
    <property type="nucleotide sequence ID" value="NC_007578.1"/>
</dbReference>
<dbReference type="SMR" id="Q56P16"/>
<dbReference type="GeneID" id="3772843"/>
<dbReference type="KEGG" id="lsv:3772843"/>
<dbReference type="OrthoDB" id="564007at2759"/>
<dbReference type="GO" id="GO:0009535">
    <property type="term" value="C:chloroplast thylakoid membrane"/>
    <property type="evidence" value="ECO:0007669"/>
    <property type="project" value="UniProtKB-SubCell"/>
</dbReference>
<dbReference type="GO" id="GO:0009539">
    <property type="term" value="C:photosystem II reaction center"/>
    <property type="evidence" value="ECO:0007669"/>
    <property type="project" value="InterPro"/>
</dbReference>
<dbReference type="GO" id="GO:0015979">
    <property type="term" value="P:photosynthesis"/>
    <property type="evidence" value="ECO:0007669"/>
    <property type="project" value="UniProtKB-UniRule"/>
</dbReference>
<dbReference type="HAMAP" id="MF_01316">
    <property type="entry name" value="PSII_PsbI"/>
    <property type="match status" value="1"/>
</dbReference>
<dbReference type="InterPro" id="IPR003686">
    <property type="entry name" value="PSII_PsbI"/>
</dbReference>
<dbReference type="InterPro" id="IPR037271">
    <property type="entry name" value="PSII_PsbI_sf"/>
</dbReference>
<dbReference type="NCBIfam" id="NF002735">
    <property type="entry name" value="PRK02655.1"/>
    <property type="match status" value="1"/>
</dbReference>
<dbReference type="PANTHER" id="PTHR35772">
    <property type="entry name" value="PHOTOSYSTEM II REACTION CENTER PROTEIN I"/>
    <property type="match status" value="1"/>
</dbReference>
<dbReference type="PANTHER" id="PTHR35772:SF1">
    <property type="entry name" value="PHOTOSYSTEM II REACTION CENTER PROTEIN I"/>
    <property type="match status" value="1"/>
</dbReference>
<dbReference type="Pfam" id="PF02532">
    <property type="entry name" value="PsbI"/>
    <property type="match status" value="1"/>
</dbReference>
<dbReference type="SUPFAM" id="SSF161041">
    <property type="entry name" value="Photosystem II reaction center protein I, PsbI"/>
    <property type="match status" value="1"/>
</dbReference>
<keyword id="KW-0150">Chloroplast</keyword>
<keyword id="KW-0472">Membrane</keyword>
<keyword id="KW-0602">Photosynthesis</keyword>
<keyword id="KW-0604">Photosystem II</keyword>
<keyword id="KW-0934">Plastid</keyword>
<keyword id="KW-0674">Reaction center</keyword>
<keyword id="KW-0793">Thylakoid</keyword>
<keyword id="KW-0812">Transmembrane</keyword>
<keyword id="KW-1133">Transmembrane helix</keyword>
<feature type="chain" id="PRO_0000219631" description="Photosystem II reaction center protein I">
    <location>
        <begin position="1"/>
        <end position="36"/>
    </location>
</feature>
<feature type="transmembrane region" description="Helical" evidence="1">
    <location>
        <begin position="4"/>
        <end position="24"/>
    </location>
</feature>
<comment type="function">
    <text evidence="1">One of the components of the core complex of photosystem II (PSII), required for its stability and/or assembly. PSII is a light-driven water:plastoquinone oxidoreductase that uses light energy to abstract electrons from H(2)O, generating O(2) and a proton gradient subsequently used for ATP formation. It consists of a core antenna complex that captures photons, and an electron transfer chain that converts photonic excitation into a charge separation.</text>
</comment>
<comment type="subunit">
    <text evidence="1">PSII is composed of 1 copy each of membrane proteins PsbA, PsbB, PsbC, PsbD, PsbE, PsbF, PsbH, PsbI, PsbJ, PsbK, PsbL, PsbM, PsbT, PsbX, PsbY, PsbZ, Psb30/Ycf12, at least 3 peripheral proteins of the oxygen-evolving complex and a large number of cofactors. It forms dimeric complexes.</text>
</comment>
<comment type="subcellular location">
    <subcellularLocation>
        <location evidence="1">Plastid</location>
        <location evidence="1">Chloroplast thylakoid membrane</location>
        <topology evidence="1">Single-pass membrane protein</topology>
    </subcellularLocation>
</comment>
<comment type="similarity">
    <text evidence="1">Belongs to the PsbI family.</text>
</comment>
<evidence type="ECO:0000255" key="1">
    <source>
        <dbReference type="HAMAP-Rule" id="MF_01316"/>
    </source>
</evidence>
<proteinExistence type="inferred from homology"/>
<name>PSBI_LACSA</name>